<evidence type="ECO:0000255" key="1">
    <source>
        <dbReference type="HAMAP-Rule" id="MF_00392"/>
    </source>
</evidence>
<comment type="function">
    <text evidence="1">Condensation of UDP-2,3-diacylglucosamine and 2,3-diacylglucosamine-1-phosphate to form lipid A disaccharide, a precursor of lipid A, a phosphorylated glycolipid that anchors the lipopolysaccharide to the outer membrane of the cell.</text>
</comment>
<comment type="catalytic activity">
    <reaction evidence="1">
        <text>2-N,3-O-bis[(3R)-3-hydroxytetradecanoyl]-alpha-D-glucosaminyl 1-phosphate + UDP-2-N,3-O-bis[(3R)-3-hydroxytetradecanoyl]-alpha-D-glucosamine = lipid A disaccharide (E. coli) + UDP + H(+)</text>
        <dbReference type="Rhea" id="RHEA:22668"/>
        <dbReference type="ChEBI" id="CHEBI:15378"/>
        <dbReference type="ChEBI" id="CHEBI:57957"/>
        <dbReference type="ChEBI" id="CHEBI:58223"/>
        <dbReference type="ChEBI" id="CHEBI:58466"/>
        <dbReference type="ChEBI" id="CHEBI:78847"/>
    </reaction>
</comment>
<comment type="catalytic activity">
    <reaction evidence="1">
        <text>a lipid X + a UDP-2-N,3-O-bis[(3R)-3-hydroxyacyl]-alpha-D-glucosamine = a lipid A disaccharide + UDP + H(+)</text>
        <dbReference type="Rhea" id="RHEA:67828"/>
        <dbReference type="ChEBI" id="CHEBI:15378"/>
        <dbReference type="ChEBI" id="CHEBI:58223"/>
        <dbReference type="ChEBI" id="CHEBI:137748"/>
        <dbReference type="ChEBI" id="CHEBI:176338"/>
        <dbReference type="ChEBI" id="CHEBI:176343"/>
        <dbReference type="EC" id="2.4.1.182"/>
    </reaction>
</comment>
<comment type="pathway">
    <text evidence="1">Glycolipid biosynthesis; lipid IV(A) biosynthesis; lipid IV(A) from (3R)-3-hydroxytetradecanoyl-[acyl-carrier-protein] and UDP-N-acetyl-alpha-D-glucosamine: step 5/6.</text>
</comment>
<comment type="similarity">
    <text evidence="1">Belongs to the LpxB family.</text>
</comment>
<name>LPXB_YERPS</name>
<dbReference type="EC" id="2.4.1.182" evidence="1"/>
<dbReference type="EMBL" id="BX936398">
    <property type="protein sequence ID" value="CAH22228.1"/>
    <property type="molecule type" value="Genomic_DNA"/>
</dbReference>
<dbReference type="RefSeq" id="WP_002212144.1">
    <property type="nucleotide sequence ID" value="NZ_CP009712.1"/>
</dbReference>
<dbReference type="SMR" id="Q667K2"/>
<dbReference type="CAZy" id="GT19">
    <property type="family name" value="Glycosyltransferase Family 19"/>
</dbReference>
<dbReference type="GeneID" id="57977504"/>
<dbReference type="KEGG" id="ypo:BZ17_3631"/>
<dbReference type="KEGG" id="yps:YPTB2990"/>
<dbReference type="PATRIC" id="fig|273123.14.peg.3812"/>
<dbReference type="UniPathway" id="UPA00359">
    <property type="reaction ID" value="UER00481"/>
</dbReference>
<dbReference type="Proteomes" id="UP000001011">
    <property type="component" value="Chromosome"/>
</dbReference>
<dbReference type="GO" id="GO:0016020">
    <property type="term" value="C:membrane"/>
    <property type="evidence" value="ECO:0007669"/>
    <property type="project" value="GOC"/>
</dbReference>
<dbReference type="GO" id="GO:0008915">
    <property type="term" value="F:lipid-A-disaccharide synthase activity"/>
    <property type="evidence" value="ECO:0007669"/>
    <property type="project" value="UniProtKB-UniRule"/>
</dbReference>
<dbReference type="GO" id="GO:0005543">
    <property type="term" value="F:phospholipid binding"/>
    <property type="evidence" value="ECO:0007669"/>
    <property type="project" value="TreeGrafter"/>
</dbReference>
<dbReference type="GO" id="GO:0009245">
    <property type="term" value="P:lipid A biosynthetic process"/>
    <property type="evidence" value="ECO:0007669"/>
    <property type="project" value="UniProtKB-UniRule"/>
</dbReference>
<dbReference type="CDD" id="cd01635">
    <property type="entry name" value="Glycosyltransferase_GTB-type"/>
    <property type="match status" value="1"/>
</dbReference>
<dbReference type="HAMAP" id="MF_00392">
    <property type="entry name" value="LpxB"/>
    <property type="match status" value="1"/>
</dbReference>
<dbReference type="InterPro" id="IPR003835">
    <property type="entry name" value="Glyco_trans_19"/>
</dbReference>
<dbReference type="NCBIfam" id="TIGR00215">
    <property type="entry name" value="lpxB"/>
    <property type="match status" value="1"/>
</dbReference>
<dbReference type="PANTHER" id="PTHR30372">
    <property type="entry name" value="LIPID-A-DISACCHARIDE SYNTHASE"/>
    <property type="match status" value="1"/>
</dbReference>
<dbReference type="PANTHER" id="PTHR30372:SF4">
    <property type="entry name" value="LIPID-A-DISACCHARIDE SYNTHASE, MITOCHONDRIAL-RELATED"/>
    <property type="match status" value="1"/>
</dbReference>
<dbReference type="Pfam" id="PF02684">
    <property type="entry name" value="LpxB"/>
    <property type="match status" value="1"/>
</dbReference>
<dbReference type="SUPFAM" id="SSF53756">
    <property type="entry name" value="UDP-Glycosyltransferase/glycogen phosphorylase"/>
    <property type="match status" value="1"/>
</dbReference>
<accession>Q667K2</accession>
<proteinExistence type="inferred from homology"/>
<keyword id="KW-0328">Glycosyltransferase</keyword>
<keyword id="KW-0441">Lipid A biosynthesis</keyword>
<keyword id="KW-0444">Lipid biosynthesis</keyword>
<keyword id="KW-0443">Lipid metabolism</keyword>
<keyword id="KW-0808">Transferase</keyword>
<protein>
    <recommendedName>
        <fullName evidence="1">Lipid-A-disaccharide synthase</fullName>
        <ecNumber evidence="1">2.4.1.182</ecNumber>
    </recommendedName>
</protein>
<reference key="1">
    <citation type="journal article" date="2004" name="Proc. Natl. Acad. Sci. U.S.A.">
        <title>Insights into the evolution of Yersinia pestis through whole-genome comparison with Yersinia pseudotuberculosis.</title>
        <authorList>
            <person name="Chain P.S.G."/>
            <person name="Carniel E."/>
            <person name="Larimer F.W."/>
            <person name="Lamerdin J."/>
            <person name="Stoutland P.O."/>
            <person name="Regala W.M."/>
            <person name="Georgescu A.M."/>
            <person name="Vergez L.M."/>
            <person name="Land M.L."/>
            <person name="Motin V.L."/>
            <person name="Brubaker R.R."/>
            <person name="Fowler J."/>
            <person name="Hinnebusch J."/>
            <person name="Marceau M."/>
            <person name="Medigue C."/>
            <person name="Simonet M."/>
            <person name="Chenal-Francisque V."/>
            <person name="Souza B."/>
            <person name="Dacheux D."/>
            <person name="Elliott J.M."/>
            <person name="Derbise A."/>
            <person name="Hauser L.J."/>
            <person name="Garcia E."/>
        </authorList>
    </citation>
    <scope>NUCLEOTIDE SEQUENCE [LARGE SCALE GENOMIC DNA]</scope>
    <source>
        <strain>IP32953</strain>
    </source>
</reference>
<gene>
    <name evidence="1" type="primary">lpxB</name>
    <name type="ordered locus">YPTB2990</name>
</gene>
<sequence>MQNSPLTADCSLNAGRPLTIGLVAGETSGDILGAGLIRALKVQVPNARFVGVAGPLMQAEGCEAWYEMEELAVMGVVEVLERLPRLLKIRKDLTQRFSELSPDVFVGIDAPDFNITLEGRLKQRGIRTIHYVSPSVWAWRQKRVFKIGKATDMVLAFLPFEKAFYDRFNVPCRFIGHTMADAMPLVPDQQAARAELGIAPNATCLALLPGSRHSEVEMLSADFLRTAVILRDKLPNLEVVVPLVNSKRREQFERIKAEIAPDLSVHLLDGKARVAMIASDAALLASGTAALECMLAKCPMVVGYRMKPFTFWLAERLVKTPYVSLPNLLAGEELVTELLQQECQPQKLAGALLPLLQGGSEIAALKERFLVLHQSIRCGADEQAAQAVLELADR</sequence>
<organism>
    <name type="scientific">Yersinia pseudotuberculosis serotype I (strain IP32953)</name>
    <dbReference type="NCBI Taxonomy" id="273123"/>
    <lineage>
        <taxon>Bacteria</taxon>
        <taxon>Pseudomonadati</taxon>
        <taxon>Pseudomonadota</taxon>
        <taxon>Gammaproteobacteria</taxon>
        <taxon>Enterobacterales</taxon>
        <taxon>Yersiniaceae</taxon>
        <taxon>Yersinia</taxon>
    </lineage>
</organism>
<feature type="chain" id="PRO_0000255236" description="Lipid-A-disaccharide synthase">
    <location>
        <begin position="1"/>
        <end position="394"/>
    </location>
</feature>